<feature type="peptide" id="PRO_0000421522" description="Extended FMRFamide-7" evidence="3">
    <location>
        <begin position="1"/>
        <end position="9"/>
    </location>
</feature>
<feature type="modified residue" description="Leucine amide" evidence="3">
    <location>
        <position position="9"/>
    </location>
</feature>
<feature type="unsure residue" description="L or I" evidence="3">
    <location>
        <position position="9"/>
    </location>
</feature>
<comment type="function">
    <text evidence="1">FMRFamides and FMRFamide-like peptides are neuropeptides.</text>
</comment>
<comment type="subcellular location">
    <subcellularLocation>
        <location evidence="6">Secreted</location>
    </subcellularLocation>
</comment>
<comment type="similarity">
    <text evidence="2">Belongs to the FARP (FMRF amide related peptide) family.</text>
</comment>
<reference evidence="5" key="1">
    <citation type="journal article" date="2012" name="Syst. Biol.">
        <title>Peptidomics-based phylogeny and biogeography of Mantophasmatodea (Hexapoda).</title>
        <authorList>
            <person name="Predel R."/>
            <person name="Neupert S."/>
            <person name="Huetteroth W."/>
            <person name="Kahnt J."/>
            <person name="Waidelich D."/>
            <person name="Roth S."/>
        </authorList>
    </citation>
    <scope>PROTEIN SEQUENCE</scope>
    <scope>AMIDATION AT LEU-9</scope>
    <source>
        <tissue evidence="3">Thoracic perisympathetic organs</tissue>
    </source>
</reference>
<protein>
    <recommendedName>
        <fullName evidence="4">Extended FMRFamide-7</fullName>
        <shortName evidence="4">FMRFa-7</shortName>
    </recommendedName>
</protein>
<keyword id="KW-0027">Amidation</keyword>
<keyword id="KW-0903">Direct protein sequencing</keyword>
<keyword id="KW-0527">Neuropeptide</keyword>
<keyword id="KW-0964">Secreted</keyword>
<sequence>ARSDNFVRL</sequence>
<organism>
    <name type="scientific">Hemilobophasma montaguense</name>
    <name type="common">Gladiator</name>
    <name type="synonym">Heel-walker</name>
    <dbReference type="NCBI Taxonomy" id="253130"/>
    <lineage>
        <taxon>Eukaryota</taxon>
        <taxon>Metazoa</taxon>
        <taxon>Ecdysozoa</taxon>
        <taxon>Arthropoda</taxon>
        <taxon>Hexapoda</taxon>
        <taxon>Insecta</taxon>
        <taxon>Pterygota</taxon>
        <taxon>Neoptera</taxon>
        <taxon>Polyneoptera</taxon>
        <taxon>Mantophasmatodea</taxon>
        <taxon>Austrophasmatidae</taxon>
        <taxon>Hemilobophasma</taxon>
    </lineage>
</organism>
<proteinExistence type="evidence at protein level"/>
<dbReference type="GO" id="GO:0005576">
    <property type="term" value="C:extracellular region"/>
    <property type="evidence" value="ECO:0007669"/>
    <property type="project" value="UniProtKB-SubCell"/>
</dbReference>
<dbReference type="GO" id="GO:0007218">
    <property type="term" value="P:neuropeptide signaling pathway"/>
    <property type="evidence" value="ECO:0007669"/>
    <property type="project" value="UniProtKB-KW"/>
</dbReference>
<name>FAR7_HEMMO</name>
<accession>B3A0C5</accession>
<evidence type="ECO:0000250" key="1">
    <source>
        <dbReference type="UniProtKB" id="P34405"/>
    </source>
</evidence>
<evidence type="ECO:0000255" key="2"/>
<evidence type="ECO:0000269" key="3">
    <source>
    </source>
</evidence>
<evidence type="ECO:0000303" key="4">
    <source>
    </source>
</evidence>
<evidence type="ECO:0000305" key="5"/>
<evidence type="ECO:0000305" key="6">
    <source>
    </source>
</evidence>